<gene>
    <name evidence="1" type="primary">rplC</name>
    <name type="ordered locus">amb3130</name>
</gene>
<proteinExistence type="inferred from homology"/>
<keyword id="KW-0488">Methylation</keyword>
<keyword id="KW-0687">Ribonucleoprotein</keyword>
<keyword id="KW-0689">Ribosomal protein</keyword>
<keyword id="KW-0694">RNA-binding</keyword>
<keyword id="KW-0699">rRNA-binding</keyword>
<name>RL3_PARM1</name>
<feature type="chain" id="PRO_0000241362" description="Large ribosomal subunit protein uL3">
    <location>
        <begin position="1"/>
        <end position="229"/>
    </location>
</feature>
<feature type="modified residue" description="N5-methylglutamine" evidence="1">
    <location>
        <position position="151"/>
    </location>
</feature>
<dbReference type="EMBL" id="AP007255">
    <property type="protein sequence ID" value="BAE51934.1"/>
    <property type="molecule type" value="Genomic_DNA"/>
</dbReference>
<dbReference type="RefSeq" id="WP_009868566.1">
    <property type="nucleotide sequence ID" value="NC_007626.1"/>
</dbReference>
<dbReference type="SMR" id="Q2W2J1"/>
<dbReference type="STRING" id="342108.amb3130"/>
<dbReference type="KEGG" id="mag:amb3130"/>
<dbReference type="HOGENOM" id="CLU_044142_2_0_5"/>
<dbReference type="OrthoDB" id="9806135at2"/>
<dbReference type="Proteomes" id="UP000007058">
    <property type="component" value="Chromosome"/>
</dbReference>
<dbReference type="GO" id="GO:0022625">
    <property type="term" value="C:cytosolic large ribosomal subunit"/>
    <property type="evidence" value="ECO:0007669"/>
    <property type="project" value="TreeGrafter"/>
</dbReference>
<dbReference type="GO" id="GO:0019843">
    <property type="term" value="F:rRNA binding"/>
    <property type="evidence" value="ECO:0007669"/>
    <property type="project" value="UniProtKB-UniRule"/>
</dbReference>
<dbReference type="GO" id="GO:0003735">
    <property type="term" value="F:structural constituent of ribosome"/>
    <property type="evidence" value="ECO:0007669"/>
    <property type="project" value="InterPro"/>
</dbReference>
<dbReference type="GO" id="GO:0006412">
    <property type="term" value="P:translation"/>
    <property type="evidence" value="ECO:0007669"/>
    <property type="project" value="UniProtKB-UniRule"/>
</dbReference>
<dbReference type="FunFam" id="2.40.30.10:FF:000004">
    <property type="entry name" value="50S ribosomal protein L3"/>
    <property type="match status" value="1"/>
</dbReference>
<dbReference type="FunFam" id="3.30.160.810:FF:000001">
    <property type="entry name" value="50S ribosomal protein L3"/>
    <property type="match status" value="1"/>
</dbReference>
<dbReference type="Gene3D" id="3.30.160.810">
    <property type="match status" value="1"/>
</dbReference>
<dbReference type="Gene3D" id="2.40.30.10">
    <property type="entry name" value="Translation factors"/>
    <property type="match status" value="1"/>
</dbReference>
<dbReference type="HAMAP" id="MF_01325_B">
    <property type="entry name" value="Ribosomal_uL3_B"/>
    <property type="match status" value="1"/>
</dbReference>
<dbReference type="InterPro" id="IPR000597">
    <property type="entry name" value="Ribosomal_uL3"/>
</dbReference>
<dbReference type="InterPro" id="IPR019927">
    <property type="entry name" value="Ribosomal_uL3_bac/org-type"/>
</dbReference>
<dbReference type="InterPro" id="IPR019926">
    <property type="entry name" value="Ribosomal_uL3_CS"/>
</dbReference>
<dbReference type="InterPro" id="IPR009000">
    <property type="entry name" value="Transl_B-barrel_sf"/>
</dbReference>
<dbReference type="NCBIfam" id="TIGR03625">
    <property type="entry name" value="L3_bact"/>
    <property type="match status" value="1"/>
</dbReference>
<dbReference type="PANTHER" id="PTHR11229">
    <property type="entry name" value="50S RIBOSOMAL PROTEIN L3"/>
    <property type="match status" value="1"/>
</dbReference>
<dbReference type="PANTHER" id="PTHR11229:SF16">
    <property type="entry name" value="LARGE RIBOSOMAL SUBUNIT PROTEIN UL3C"/>
    <property type="match status" value="1"/>
</dbReference>
<dbReference type="Pfam" id="PF00297">
    <property type="entry name" value="Ribosomal_L3"/>
    <property type="match status" value="1"/>
</dbReference>
<dbReference type="SUPFAM" id="SSF50447">
    <property type="entry name" value="Translation proteins"/>
    <property type="match status" value="1"/>
</dbReference>
<dbReference type="PROSITE" id="PS00474">
    <property type="entry name" value="RIBOSOMAL_L3"/>
    <property type="match status" value="1"/>
</dbReference>
<evidence type="ECO:0000255" key="1">
    <source>
        <dbReference type="HAMAP-Rule" id="MF_01325"/>
    </source>
</evidence>
<evidence type="ECO:0000305" key="2"/>
<comment type="function">
    <text evidence="1">One of the primary rRNA binding proteins, it binds directly near the 3'-end of the 23S rRNA, where it nucleates assembly of the 50S subunit.</text>
</comment>
<comment type="subunit">
    <text evidence="1">Part of the 50S ribosomal subunit. Forms a cluster with proteins L14 and L19.</text>
</comment>
<comment type="PTM">
    <text evidence="1">Methylated by PrmB.</text>
</comment>
<comment type="similarity">
    <text evidence="1">Belongs to the universal ribosomal protein uL3 family.</text>
</comment>
<accession>Q2W2J1</accession>
<sequence>MRSGLIAQKVGMTRIFTEDGTHVPVTVLKVDTCQVVSTRSVEKDGYVAVQLGAGTAKVKNVSKPARANFAKAKVEPKKKLVEFRVAPENLLEVGTELSAAHFIPGQYVDVTGTTIGKGFAGGMKRWNFRGLEATHGVSVSHRSHGSTGQRQDPGKVFKGKKMAGHMGDEQVTTQNLTVVSTDADRGLILVKGSVPGHEGSWVLVRDAVKRKLPDGVPFPAGVKAAASAE</sequence>
<organism>
    <name type="scientific">Paramagnetospirillum magneticum (strain ATCC 700264 / AMB-1)</name>
    <name type="common">Magnetospirillum magneticum</name>
    <dbReference type="NCBI Taxonomy" id="342108"/>
    <lineage>
        <taxon>Bacteria</taxon>
        <taxon>Pseudomonadati</taxon>
        <taxon>Pseudomonadota</taxon>
        <taxon>Alphaproteobacteria</taxon>
        <taxon>Rhodospirillales</taxon>
        <taxon>Magnetospirillaceae</taxon>
        <taxon>Paramagnetospirillum</taxon>
    </lineage>
</organism>
<reference key="1">
    <citation type="journal article" date="2005" name="DNA Res.">
        <title>Complete genome sequence of the facultative anaerobic magnetotactic bacterium Magnetospirillum sp. strain AMB-1.</title>
        <authorList>
            <person name="Matsunaga T."/>
            <person name="Okamura Y."/>
            <person name="Fukuda Y."/>
            <person name="Wahyudi A.T."/>
            <person name="Murase Y."/>
            <person name="Takeyama H."/>
        </authorList>
    </citation>
    <scope>NUCLEOTIDE SEQUENCE [LARGE SCALE GENOMIC DNA]</scope>
    <source>
        <strain>ATCC 700264 / AMB-1</strain>
    </source>
</reference>
<protein>
    <recommendedName>
        <fullName evidence="1">Large ribosomal subunit protein uL3</fullName>
    </recommendedName>
    <alternativeName>
        <fullName evidence="2">50S ribosomal protein L3</fullName>
    </alternativeName>
</protein>